<name>CLPX_PORG3</name>
<dbReference type="EMBL" id="AP009380">
    <property type="protein sequence ID" value="BAG34069.1"/>
    <property type="molecule type" value="Genomic_DNA"/>
</dbReference>
<dbReference type="RefSeq" id="WP_005873798.1">
    <property type="nucleotide sequence ID" value="NZ_CP025930.1"/>
</dbReference>
<dbReference type="SMR" id="B2RL24"/>
<dbReference type="GeneID" id="29256727"/>
<dbReference type="KEGG" id="pgn:PGN_1550"/>
<dbReference type="eggNOG" id="COG1219">
    <property type="taxonomic scope" value="Bacteria"/>
</dbReference>
<dbReference type="HOGENOM" id="CLU_014218_8_2_10"/>
<dbReference type="OrthoDB" id="9804062at2"/>
<dbReference type="BioCyc" id="PGIN431947:G1G2V-1752-MONOMER"/>
<dbReference type="Proteomes" id="UP000008842">
    <property type="component" value="Chromosome"/>
</dbReference>
<dbReference type="GO" id="GO:0009376">
    <property type="term" value="C:HslUV protease complex"/>
    <property type="evidence" value="ECO:0007669"/>
    <property type="project" value="TreeGrafter"/>
</dbReference>
<dbReference type="GO" id="GO:0005524">
    <property type="term" value="F:ATP binding"/>
    <property type="evidence" value="ECO:0007669"/>
    <property type="project" value="UniProtKB-UniRule"/>
</dbReference>
<dbReference type="GO" id="GO:0016887">
    <property type="term" value="F:ATP hydrolysis activity"/>
    <property type="evidence" value="ECO:0007669"/>
    <property type="project" value="InterPro"/>
</dbReference>
<dbReference type="GO" id="GO:0140662">
    <property type="term" value="F:ATP-dependent protein folding chaperone"/>
    <property type="evidence" value="ECO:0007669"/>
    <property type="project" value="InterPro"/>
</dbReference>
<dbReference type="GO" id="GO:0046983">
    <property type="term" value="F:protein dimerization activity"/>
    <property type="evidence" value="ECO:0007669"/>
    <property type="project" value="InterPro"/>
</dbReference>
<dbReference type="GO" id="GO:0051082">
    <property type="term" value="F:unfolded protein binding"/>
    <property type="evidence" value="ECO:0007669"/>
    <property type="project" value="UniProtKB-UniRule"/>
</dbReference>
<dbReference type="GO" id="GO:0008270">
    <property type="term" value="F:zinc ion binding"/>
    <property type="evidence" value="ECO:0007669"/>
    <property type="project" value="InterPro"/>
</dbReference>
<dbReference type="GO" id="GO:0051301">
    <property type="term" value="P:cell division"/>
    <property type="evidence" value="ECO:0007669"/>
    <property type="project" value="TreeGrafter"/>
</dbReference>
<dbReference type="GO" id="GO:0051603">
    <property type="term" value="P:proteolysis involved in protein catabolic process"/>
    <property type="evidence" value="ECO:0007669"/>
    <property type="project" value="TreeGrafter"/>
</dbReference>
<dbReference type="CDD" id="cd19497">
    <property type="entry name" value="RecA-like_ClpX"/>
    <property type="match status" value="1"/>
</dbReference>
<dbReference type="FunFam" id="1.10.8.60:FF:000002">
    <property type="entry name" value="ATP-dependent Clp protease ATP-binding subunit ClpX"/>
    <property type="match status" value="1"/>
</dbReference>
<dbReference type="FunFam" id="3.40.50.300:FF:000005">
    <property type="entry name" value="ATP-dependent Clp protease ATP-binding subunit ClpX"/>
    <property type="match status" value="1"/>
</dbReference>
<dbReference type="Gene3D" id="1.10.8.60">
    <property type="match status" value="1"/>
</dbReference>
<dbReference type="Gene3D" id="6.20.220.10">
    <property type="entry name" value="ClpX chaperone, C4-type zinc finger domain"/>
    <property type="match status" value="1"/>
</dbReference>
<dbReference type="Gene3D" id="3.40.50.300">
    <property type="entry name" value="P-loop containing nucleotide triphosphate hydrolases"/>
    <property type="match status" value="1"/>
</dbReference>
<dbReference type="HAMAP" id="MF_00175">
    <property type="entry name" value="ClpX"/>
    <property type="match status" value="1"/>
</dbReference>
<dbReference type="InterPro" id="IPR003593">
    <property type="entry name" value="AAA+_ATPase"/>
</dbReference>
<dbReference type="InterPro" id="IPR050052">
    <property type="entry name" value="ATP-dep_Clp_protease_ClpX"/>
</dbReference>
<dbReference type="InterPro" id="IPR003959">
    <property type="entry name" value="ATPase_AAA_core"/>
</dbReference>
<dbReference type="InterPro" id="IPR019489">
    <property type="entry name" value="Clp_ATPase_C"/>
</dbReference>
<dbReference type="InterPro" id="IPR004487">
    <property type="entry name" value="Clp_protease_ATP-bd_su_ClpX"/>
</dbReference>
<dbReference type="InterPro" id="IPR046425">
    <property type="entry name" value="ClpX_bact"/>
</dbReference>
<dbReference type="InterPro" id="IPR027417">
    <property type="entry name" value="P-loop_NTPase"/>
</dbReference>
<dbReference type="InterPro" id="IPR010603">
    <property type="entry name" value="Znf_CppX_C4"/>
</dbReference>
<dbReference type="InterPro" id="IPR038366">
    <property type="entry name" value="Znf_CppX_C4_sf"/>
</dbReference>
<dbReference type="NCBIfam" id="TIGR00382">
    <property type="entry name" value="clpX"/>
    <property type="match status" value="1"/>
</dbReference>
<dbReference type="NCBIfam" id="NF003745">
    <property type="entry name" value="PRK05342.1"/>
    <property type="match status" value="1"/>
</dbReference>
<dbReference type="PANTHER" id="PTHR48102:SF7">
    <property type="entry name" value="ATP-DEPENDENT CLP PROTEASE ATP-BINDING SUBUNIT CLPX-LIKE, MITOCHONDRIAL"/>
    <property type="match status" value="1"/>
</dbReference>
<dbReference type="PANTHER" id="PTHR48102">
    <property type="entry name" value="ATP-DEPENDENT CLP PROTEASE ATP-BINDING SUBUNIT CLPX-LIKE, MITOCHONDRIAL-RELATED"/>
    <property type="match status" value="1"/>
</dbReference>
<dbReference type="Pfam" id="PF07724">
    <property type="entry name" value="AAA_2"/>
    <property type="match status" value="1"/>
</dbReference>
<dbReference type="Pfam" id="PF10431">
    <property type="entry name" value="ClpB_D2-small"/>
    <property type="match status" value="1"/>
</dbReference>
<dbReference type="Pfam" id="PF06689">
    <property type="entry name" value="zf-C4_ClpX"/>
    <property type="match status" value="1"/>
</dbReference>
<dbReference type="SMART" id="SM00382">
    <property type="entry name" value="AAA"/>
    <property type="match status" value="1"/>
</dbReference>
<dbReference type="SMART" id="SM01086">
    <property type="entry name" value="ClpB_D2-small"/>
    <property type="match status" value="1"/>
</dbReference>
<dbReference type="SMART" id="SM00994">
    <property type="entry name" value="zf-C4_ClpX"/>
    <property type="match status" value="1"/>
</dbReference>
<dbReference type="SUPFAM" id="SSF57716">
    <property type="entry name" value="Glucocorticoid receptor-like (DNA-binding domain)"/>
    <property type="match status" value="1"/>
</dbReference>
<dbReference type="SUPFAM" id="SSF52540">
    <property type="entry name" value="P-loop containing nucleoside triphosphate hydrolases"/>
    <property type="match status" value="1"/>
</dbReference>
<dbReference type="PROSITE" id="PS51902">
    <property type="entry name" value="CLPX_ZB"/>
    <property type="match status" value="1"/>
</dbReference>
<sequence>MAKKKDEEYCSFCGMPRTQVNLMLEGVHAHICDECALRAGEVVREALQKFKSEETNNLKREDLPRPIEIKEFLDSYVIGQDDAKRFLSVAVYNHYKRLLQQEDSDGVEIEKSNIIMVGPTGTGKTLLARTIAKMLHVPFAVVDATVLTEAGYVGEDIESILTRLLQAADYDVKQAERGIVFIDEIDKIARKSDNPSITRDVSGEGVQQGLLKLLEGSIVNVPPQGGRKHPEQKMIPVDTRHILFVCAGAFDGIEKKIAQRLNTRVVGYTAGLQNRHIDRENMLRYIRPQDLKSFGLIPEIIGRLPILTHLEPLDRDALRNIMTEPKNAITKQYEKLFAMDGIKVSFTSDMLDFVVDKAIEFKLGARGLRSIVETIMMDAMFTMPSGKKKTLVVDKAYAEAHLNIDDLLQDQ</sequence>
<evidence type="ECO:0000255" key="1">
    <source>
        <dbReference type="HAMAP-Rule" id="MF_00175"/>
    </source>
</evidence>
<evidence type="ECO:0000255" key="2">
    <source>
        <dbReference type="PROSITE-ProRule" id="PRU01250"/>
    </source>
</evidence>
<keyword id="KW-0067">ATP-binding</keyword>
<keyword id="KW-0143">Chaperone</keyword>
<keyword id="KW-0479">Metal-binding</keyword>
<keyword id="KW-0547">Nucleotide-binding</keyword>
<keyword id="KW-0862">Zinc</keyword>
<organism>
    <name type="scientific">Porphyromonas gingivalis (strain ATCC 33277 / DSM 20709 / CIP 103683 / JCM 12257 / NCTC 11834 / 2561)</name>
    <dbReference type="NCBI Taxonomy" id="431947"/>
    <lineage>
        <taxon>Bacteria</taxon>
        <taxon>Pseudomonadati</taxon>
        <taxon>Bacteroidota</taxon>
        <taxon>Bacteroidia</taxon>
        <taxon>Bacteroidales</taxon>
        <taxon>Porphyromonadaceae</taxon>
        <taxon>Porphyromonas</taxon>
    </lineage>
</organism>
<accession>B2RL24</accession>
<reference key="1">
    <citation type="journal article" date="2008" name="DNA Res.">
        <title>Determination of the genome sequence of Porphyromonas gingivalis strain ATCC 33277 and genomic comparison with strain W83 revealed extensive genome rearrangements in P. gingivalis.</title>
        <authorList>
            <person name="Naito M."/>
            <person name="Hirakawa H."/>
            <person name="Yamashita A."/>
            <person name="Ohara N."/>
            <person name="Shoji M."/>
            <person name="Yukitake H."/>
            <person name="Nakayama K."/>
            <person name="Toh H."/>
            <person name="Yoshimura F."/>
            <person name="Kuhara S."/>
            <person name="Hattori M."/>
            <person name="Hayashi T."/>
            <person name="Nakayama K."/>
        </authorList>
    </citation>
    <scope>NUCLEOTIDE SEQUENCE [LARGE SCALE GENOMIC DNA]</scope>
    <source>
        <strain>ATCC 33277 / DSM 20709 / CIP 103683 / JCM 12257 / NCTC 11834 / 2561</strain>
    </source>
</reference>
<proteinExistence type="inferred from homology"/>
<protein>
    <recommendedName>
        <fullName evidence="1">ATP-dependent Clp protease ATP-binding subunit ClpX</fullName>
    </recommendedName>
</protein>
<gene>
    <name evidence="1" type="primary">clpX</name>
    <name type="ordered locus">PGN_1550</name>
</gene>
<comment type="function">
    <text evidence="1">ATP-dependent specificity component of the Clp protease. It directs the protease to specific substrates. Can perform chaperone functions in the absence of ClpP.</text>
</comment>
<comment type="subunit">
    <text evidence="1">Component of the ClpX-ClpP complex. Forms a hexameric ring that, in the presence of ATP, binds to fourteen ClpP subunits assembled into a disk-like structure with a central cavity, resembling the structure of eukaryotic proteasomes.</text>
</comment>
<comment type="similarity">
    <text evidence="1">Belongs to the ClpX chaperone family.</text>
</comment>
<feature type="chain" id="PRO_1000097981" description="ATP-dependent Clp protease ATP-binding subunit ClpX">
    <location>
        <begin position="1"/>
        <end position="411"/>
    </location>
</feature>
<feature type="domain" description="ClpX-type ZB" evidence="2">
    <location>
        <begin position="1"/>
        <end position="51"/>
    </location>
</feature>
<feature type="binding site" evidence="2">
    <location>
        <position position="10"/>
    </location>
    <ligand>
        <name>Zn(2+)</name>
        <dbReference type="ChEBI" id="CHEBI:29105"/>
    </ligand>
</feature>
<feature type="binding site" evidence="2">
    <location>
        <position position="13"/>
    </location>
    <ligand>
        <name>Zn(2+)</name>
        <dbReference type="ChEBI" id="CHEBI:29105"/>
    </ligand>
</feature>
<feature type="binding site" evidence="2">
    <location>
        <position position="32"/>
    </location>
    <ligand>
        <name>Zn(2+)</name>
        <dbReference type="ChEBI" id="CHEBI:29105"/>
    </ligand>
</feature>
<feature type="binding site" evidence="2">
    <location>
        <position position="35"/>
    </location>
    <ligand>
        <name>Zn(2+)</name>
        <dbReference type="ChEBI" id="CHEBI:29105"/>
    </ligand>
</feature>
<feature type="binding site" evidence="1">
    <location>
        <begin position="119"/>
        <end position="126"/>
    </location>
    <ligand>
        <name>ATP</name>
        <dbReference type="ChEBI" id="CHEBI:30616"/>
    </ligand>
</feature>